<reference key="1">
    <citation type="journal article" date="2007" name="Genes Dev.">
        <title>New insights into Acinetobacter baumannii pathogenesis revealed by high-density pyrosequencing and transposon mutagenesis.</title>
        <authorList>
            <person name="Smith M.G."/>
            <person name="Gianoulis T.A."/>
            <person name="Pukatzki S."/>
            <person name="Mekalanos J.J."/>
            <person name="Ornston L.N."/>
            <person name="Gerstein M."/>
            <person name="Snyder M."/>
        </authorList>
    </citation>
    <scope>NUCLEOTIDE SEQUENCE [LARGE SCALE GENOMIC DNA]</scope>
    <source>
        <strain>ATCC 17978 / DSM 105126 / CIP 53.77 / LMG 1025 / NCDC KC755 / 5377</strain>
    </source>
</reference>
<keyword id="KW-0963">Cytoplasm</keyword>
<keyword id="KW-0328">Glycosyltransferase</keyword>
<keyword id="KW-0660">Purine salvage</keyword>
<keyword id="KW-0808">Transferase</keyword>
<feature type="chain" id="PRO_0000339655" description="Xanthine phosphoribosyltransferase">
    <location>
        <begin position="1"/>
        <end position="191"/>
    </location>
</feature>
<feature type="binding site" evidence="1">
    <location>
        <position position="20"/>
    </location>
    <ligand>
        <name>xanthine</name>
        <dbReference type="ChEBI" id="CHEBI:17712"/>
    </ligand>
</feature>
<feature type="binding site" evidence="1">
    <location>
        <position position="27"/>
    </location>
    <ligand>
        <name>xanthine</name>
        <dbReference type="ChEBI" id="CHEBI:17712"/>
    </ligand>
</feature>
<feature type="binding site" evidence="1">
    <location>
        <begin position="128"/>
        <end position="132"/>
    </location>
    <ligand>
        <name>5-phospho-alpha-D-ribose 1-diphosphate</name>
        <dbReference type="ChEBI" id="CHEBI:58017"/>
    </ligand>
</feature>
<feature type="binding site" evidence="1">
    <location>
        <position position="156"/>
    </location>
    <ligand>
        <name>xanthine</name>
        <dbReference type="ChEBI" id="CHEBI:17712"/>
    </ligand>
</feature>
<proteinExistence type="inferred from homology"/>
<sequence>MHALEQKILTEGIVLSDQVLKVDAFLNHQIDPVLMQQIGKEFAARFKDAGITKIITIEASGIAPAIMAGLELGVPVIFARKYQSLTLKDDLYRAKVFSFTKQTESTIAISNKHINSSDKALVIDDFLANGQAALGLIDLIHQANAEVVGVGIVIEKSFQPGRDLLLEKGYRVESLARVQSLADGTVTFVKE</sequence>
<comment type="function">
    <text evidence="1">Converts the preformed base xanthine, a product of nucleic acid breakdown, to xanthosine 5'-monophosphate (XMP), so it can be reused for RNA or DNA synthesis.</text>
</comment>
<comment type="catalytic activity">
    <reaction evidence="1">
        <text>XMP + diphosphate = xanthine + 5-phospho-alpha-D-ribose 1-diphosphate</text>
        <dbReference type="Rhea" id="RHEA:10800"/>
        <dbReference type="ChEBI" id="CHEBI:17712"/>
        <dbReference type="ChEBI" id="CHEBI:33019"/>
        <dbReference type="ChEBI" id="CHEBI:57464"/>
        <dbReference type="ChEBI" id="CHEBI:58017"/>
        <dbReference type="EC" id="2.4.2.22"/>
    </reaction>
</comment>
<comment type="pathway">
    <text evidence="1">Purine metabolism; XMP biosynthesis via salvage pathway; XMP from xanthine: step 1/1.</text>
</comment>
<comment type="subunit">
    <text evidence="1">Homodimer.</text>
</comment>
<comment type="subcellular location">
    <subcellularLocation>
        <location evidence="1">Cytoplasm</location>
    </subcellularLocation>
</comment>
<comment type="similarity">
    <text evidence="1">Belongs to the purine/pyrimidine phosphoribosyltransferase family. Xpt subfamily.</text>
</comment>
<protein>
    <recommendedName>
        <fullName evidence="1">Xanthine phosphoribosyltransferase</fullName>
        <shortName evidence="1">XPRTase</shortName>
        <ecNumber evidence="1">2.4.2.22</ecNumber>
    </recommendedName>
</protein>
<accession>A3M938</accession>
<dbReference type="EC" id="2.4.2.22" evidence="1"/>
<dbReference type="EMBL" id="CP000521">
    <property type="protein sequence ID" value="ABO13432.2"/>
    <property type="molecule type" value="Genomic_DNA"/>
</dbReference>
<dbReference type="RefSeq" id="WP_000543071.1">
    <property type="nucleotide sequence ID" value="NZ_CP053098.1"/>
</dbReference>
<dbReference type="SMR" id="A3M938"/>
<dbReference type="KEGG" id="acb:A1S_3035"/>
<dbReference type="HOGENOM" id="CLU_099015_0_0_6"/>
<dbReference type="UniPathway" id="UPA00602">
    <property type="reaction ID" value="UER00658"/>
</dbReference>
<dbReference type="GO" id="GO:0005737">
    <property type="term" value="C:cytoplasm"/>
    <property type="evidence" value="ECO:0007669"/>
    <property type="project" value="UniProtKB-SubCell"/>
</dbReference>
<dbReference type="GO" id="GO:0000310">
    <property type="term" value="F:xanthine phosphoribosyltransferase activity"/>
    <property type="evidence" value="ECO:0007669"/>
    <property type="project" value="UniProtKB-UniRule"/>
</dbReference>
<dbReference type="GO" id="GO:0006166">
    <property type="term" value="P:purine ribonucleoside salvage"/>
    <property type="evidence" value="ECO:0007669"/>
    <property type="project" value="UniProtKB-KW"/>
</dbReference>
<dbReference type="GO" id="GO:0046110">
    <property type="term" value="P:xanthine metabolic process"/>
    <property type="evidence" value="ECO:0007669"/>
    <property type="project" value="InterPro"/>
</dbReference>
<dbReference type="GO" id="GO:0032265">
    <property type="term" value="P:XMP salvage"/>
    <property type="evidence" value="ECO:0007669"/>
    <property type="project" value="UniProtKB-UniRule"/>
</dbReference>
<dbReference type="CDD" id="cd06223">
    <property type="entry name" value="PRTases_typeI"/>
    <property type="match status" value="1"/>
</dbReference>
<dbReference type="Gene3D" id="3.40.50.2020">
    <property type="match status" value="1"/>
</dbReference>
<dbReference type="HAMAP" id="MF_01184">
    <property type="entry name" value="XPRTase"/>
    <property type="match status" value="1"/>
</dbReference>
<dbReference type="InterPro" id="IPR000836">
    <property type="entry name" value="PRibTrfase_dom"/>
</dbReference>
<dbReference type="InterPro" id="IPR029057">
    <property type="entry name" value="PRTase-like"/>
</dbReference>
<dbReference type="InterPro" id="IPR050118">
    <property type="entry name" value="Pur/Pyrimidine_PRTase"/>
</dbReference>
<dbReference type="InterPro" id="IPR010079">
    <property type="entry name" value="Xanthine_PRibTrfase"/>
</dbReference>
<dbReference type="NCBIfam" id="NF006671">
    <property type="entry name" value="PRK09219.1"/>
    <property type="match status" value="1"/>
</dbReference>
<dbReference type="NCBIfam" id="TIGR01744">
    <property type="entry name" value="XPRTase"/>
    <property type="match status" value="1"/>
</dbReference>
<dbReference type="PANTHER" id="PTHR43864">
    <property type="entry name" value="HYPOXANTHINE/GUANINE PHOSPHORIBOSYLTRANSFERASE"/>
    <property type="match status" value="1"/>
</dbReference>
<dbReference type="PANTHER" id="PTHR43864:SF1">
    <property type="entry name" value="XANTHINE PHOSPHORIBOSYLTRANSFERASE"/>
    <property type="match status" value="1"/>
</dbReference>
<dbReference type="SUPFAM" id="SSF53271">
    <property type="entry name" value="PRTase-like"/>
    <property type="match status" value="1"/>
</dbReference>
<name>XPT_ACIBT</name>
<evidence type="ECO:0000255" key="1">
    <source>
        <dbReference type="HAMAP-Rule" id="MF_01184"/>
    </source>
</evidence>
<gene>
    <name evidence="1" type="primary">xpt</name>
    <name type="ordered locus">A1S_3035</name>
</gene>
<organism>
    <name type="scientific">Acinetobacter baumannii (strain ATCC 17978 / DSM 105126 / CIP 53.77 / LMG 1025 / NCDC KC755 / 5377)</name>
    <dbReference type="NCBI Taxonomy" id="400667"/>
    <lineage>
        <taxon>Bacteria</taxon>
        <taxon>Pseudomonadati</taxon>
        <taxon>Pseudomonadota</taxon>
        <taxon>Gammaproteobacteria</taxon>
        <taxon>Moraxellales</taxon>
        <taxon>Moraxellaceae</taxon>
        <taxon>Acinetobacter</taxon>
        <taxon>Acinetobacter calcoaceticus/baumannii complex</taxon>
    </lineage>
</organism>